<name>RSGA_MARN8</name>
<comment type="function">
    <text evidence="1">One of several proteins that assist in the late maturation steps of the functional core of the 30S ribosomal subunit. Helps release RbfA from mature subunits. May play a role in the assembly of ribosomal proteins into the subunit. Circularly permuted GTPase that catalyzes slow GTP hydrolysis, GTPase activity is stimulated by the 30S ribosomal subunit.</text>
</comment>
<comment type="cofactor">
    <cofactor evidence="1">
        <name>Zn(2+)</name>
        <dbReference type="ChEBI" id="CHEBI:29105"/>
    </cofactor>
    <text evidence="1">Binds 1 zinc ion per subunit.</text>
</comment>
<comment type="subunit">
    <text evidence="1">Monomer. Associates with 30S ribosomal subunit, binds 16S rRNA.</text>
</comment>
<comment type="subcellular location">
    <subcellularLocation>
        <location evidence="1">Cytoplasm</location>
    </subcellularLocation>
</comment>
<comment type="similarity">
    <text evidence="1">Belongs to the TRAFAC class YlqF/YawG GTPase family. RsgA subfamily.</text>
</comment>
<evidence type="ECO:0000255" key="1">
    <source>
        <dbReference type="HAMAP-Rule" id="MF_01820"/>
    </source>
</evidence>
<evidence type="ECO:0000255" key="2">
    <source>
        <dbReference type="PROSITE-ProRule" id="PRU01058"/>
    </source>
</evidence>
<proteinExistence type="inferred from homology"/>
<sequence length="351" mass="38632">MAKRRLNKRQQWRIEKIQKERTVRAARKEKAVEEQAAAGELGPEQNGLVIAHYGQQLDIEALEGPESGQVFRCFVRANIDSLVTGDRVVWRPGKSKTGVIVARCERENLLQRPDNFGALKPVAANIDHIILVIAPEPEPHDNLIDRYLVASESSDIPAVILLNKTDLINDDNRDQIEALLARYQALGYEVARTSAAETAGTPAPEVEALVRNQTSVFVGQSGVGKSSIIQTLLPDELLRVGAVSESTGKGVHTTTTAKLFHLPGGGDLIDSPGIREFGLWHMTPQEVEYGFREIRPLIGLCKFRNCRHMGDPGCALDAAAEAGDISPERLKSFHRILQDMTDQQARGLKLT</sequence>
<organism>
    <name type="scientific">Marinobacter nauticus (strain ATCC 700491 / DSM 11845 / VT8)</name>
    <name type="common">Marinobacter aquaeolei</name>
    <dbReference type="NCBI Taxonomy" id="351348"/>
    <lineage>
        <taxon>Bacteria</taxon>
        <taxon>Pseudomonadati</taxon>
        <taxon>Pseudomonadota</taxon>
        <taxon>Gammaproteobacteria</taxon>
        <taxon>Pseudomonadales</taxon>
        <taxon>Marinobacteraceae</taxon>
        <taxon>Marinobacter</taxon>
    </lineage>
</organism>
<feature type="chain" id="PRO_1000188100" description="Small ribosomal subunit biogenesis GTPase RsgA">
    <location>
        <begin position="1"/>
        <end position="351"/>
    </location>
</feature>
<feature type="domain" description="CP-type G" evidence="2">
    <location>
        <begin position="107"/>
        <end position="277"/>
    </location>
</feature>
<feature type="binding site" evidence="1">
    <location>
        <begin position="163"/>
        <end position="166"/>
    </location>
    <ligand>
        <name>GTP</name>
        <dbReference type="ChEBI" id="CHEBI:37565"/>
    </ligand>
</feature>
<feature type="binding site" evidence="1">
    <location>
        <begin position="219"/>
        <end position="227"/>
    </location>
    <ligand>
        <name>GTP</name>
        <dbReference type="ChEBI" id="CHEBI:37565"/>
    </ligand>
</feature>
<feature type="binding site" evidence="1">
    <location>
        <position position="301"/>
    </location>
    <ligand>
        <name>Zn(2+)</name>
        <dbReference type="ChEBI" id="CHEBI:29105"/>
    </ligand>
</feature>
<feature type="binding site" evidence="1">
    <location>
        <position position="306"/>
    </location>
    <ligand>
        <name>Zn(2+)</name>
        <dbReference type="ChEBI" id="CHEBI:29105"/>
    </ligand>
</feature>
<feature type="binding site" evidence="1">
    <location>
        <position position="308"/>
    </location>
    <ligand>
        <name>Zn(2+)</name>
        <dbReference type="ChEBI" id="CHEBI:29105"/>
    </ligand>
</feature>
<feature type="binding site" evidence="1">
    <location>
        <position position="314"/>
    </location>
    <ligand>
        <name>Zn(2+)</name>
        <dbReference type="ChEBI" id="CHEBI:29105"/>
    </ligand>
</feature>
<reference key="1">
    <citation type="journal article" date="2011" name="Appl. Environ. Microbiol.">
        <title>Genomic potential of Marinobacter aquaeolei, a biogeochemical 'opportunitroph'.</title>
        <authorList>
            <person name="Singer E."/>
            <person name="Webb E.A."/>
            <person name="Nelson W.C."/>
            <person name="Heidelberg J.F."/>
            <person name="Ivanova N."/>
            <person name="Pati A."/>
            <person name="Edwards K.J."/>
        </authorList>
    </citation>
    <scope>NUCLEOTIDE SEQUENCE [LARGE SCALE GENOMIC DNA]</scope>
    <source>
        <strain>ATCC 700491 / DSM 11845 / VT8</strain>
    </source>
</reference>
<gene>
    <name evidence="1" type="primary">rsgA</name>
    <name type="ordered locus">Maqu_2777</name>
</gene>
<keyword id="KW-0963">Cytoplasm</keyword>
<keyword id="KW-0342">GTP-binding</keyword>
<keyword id="KW-0378">Hydrolase</keyword>
<keyword id="KW-0479">Metal-binding</keyword>
<keyword id="KW-0547">Nucleotide-binding</keyword>
<keyword id="KW-0690">Ribosome biogenesis</keyword>
<keyword id="KW-0694">RNA-binding</keyword>
<keyword id="KW-0699">rRNA-binding</keyword>
<keyword id="KW-0862">Zinc</keyword>
<protein>
    <recommendedName>
        <fullName evidence="1">Small ribosomal subunit biogenesis GTPase RsgA</fullName>
        <ecNumber evidence="1">3.6.1.-</ecNumber>
    </recommendedName>
</protein>
<accession>A1U4D3</accession>
<dbReference type="EC" id="3.6.1.-" evidence="1"/>
<dbReference type="EMBL" id="CP000514">
    <property type="protein sequence ID" value="ABM19852.1"/>
    <property type="molecule type" value="Genomic_DNA"/>
</dbReference>
<dbReference type="RefSeq" id="WP_011786222.1">
    <property type="nucleotide sequence ID" value="NC_008740.1"/>
</dbReference>
<dbReference type="SMR" id="A1U4D3"/>
<dbReference type="STRING" id="351348.Maqu_2777"/>
<dbReference type="KEGG" id="maq:Maqu_2777"/>
<dbReference type="eggNOG" id="COG1162">
    <property type="taxonomic scope" value="Bacteria"/>
</dbReference>
<dbReference type="HOGENOM" id="CLU_033617_2_0_6"/>
<dbReference type="OrthoDB" id="9809485at2"/>
<dbReference type="Proteomes" id="UP000000998">
    <property type="component" value="Chromosome"/>
</dbReference>
<dbReference type="GO" id="GO:0005737">
    <property type="term" value="C:cytoplasm"/>
    <property type="evidence" value="ECO:0007669"/>
    <property type="project" value="UniProtKB-SubCell"/>
</dbReference>
<dbReference type="GO" id="GO:0005525">
    <property type="term" value="F:GTP binding"/>
    <property type="evidence" value="ECO:0007669"/>
    <property type="project" value="UniProtKB-UniRule"/>
</dbReference>
<dbReference type="GO" id="GO:0003924">
    <property type="term" value="F:GTPase activity"/>
    <property type="evidence" value="ECO:0007669"/>
    <property type="project" value="UniProtKB-UniRule"/>
</dbReference>
<dbReference type="GO" id="GO:0046872">
    <property type="term" value="F:metal ion binding"/>
    <property type="evidence" value="ECO:0007669"/>
    <property type="project" value="UniProtKB-KW"/>
</dbReference>
<dbReference type="GO" id="GO:0019843">
    <property type="term" value="F:rRNA binding"/>
    <property type="evidence" value="ECO:0007669"/>
    <property type="project" value="UniProtKB-KW"/>
</dbReference>
<dbReference type="GO" id="GO:0042274">
    <property type="term" value="P:ribosomal small subunit biogenesis"/>
    <property type="evidence" value="ECO:0007669"/>
    <property type="project" value="UniProtKB-UniRule"/>
</dbReference>
<dbReference type="CDD" id="cd01854">
    <property type="entry name" value="YjeQ_EngC"/>
    <property type="match status" value="1"/>
</dbReference>
<dbReference type="Gene3D" id="2.40.50.140">
    <property type="entry name" value="Nucleic acid-binding proteins"/>
    <property type="match status" value="1"/>
</dbReference>
<dbReference type="Gene3D" id="3.40.50.300">
    <property type="entry name" value="P-loop containing nucleotide triphosphate hydrolases"/>
    <property type="match status" value="1"/>
</dbReference>
<dbReference type="Gene3D" id="1.10.40.50">
    <property type="entry name" value="Probable gtpase engc, domain 3"/>
    <property type="match status" value="1"/>
</dbReference>
<dbReference type="HAMAP" id="MF_01820">
    <property type="entry name" value="GTPase_RsgA"/>
    <property type="match status" value="1"/>
</dbReference>
<dbReference type="InterPro" id="IPR030378">
    <property type="entry name" value="G_CP_dom"/>
</dbReference>
<dbReference type="InterPro" id="IPR012340">
    <property type="entry name" value="NA-bd_OB-fold"/>
</dbReference>
<dbReference type="InterPro" id="IPR027417">
    <property type="entry name" value="P-loop_NTPase"/>
</dbReference>
<dbReference type="InterPro" id="IPR004881">
    <property type="entry name" value="Ribosome_biogen_GTPase_RsgA"/>
</dbReference>
<dbReference type="InterPro" id="IPR010914">
    <property type="entry name" value="RsgA_GTPase_dom"/>
</dbReference>
<dbReference type="NCBIfam" id="NF008931">
    <property type="entry name" value="PRK12288.1"/>
    <property type="match status" value="1"/>
</dbReference>
<dbReference type="NCBIfam" id="TIGR00157">
    <property type="entry name" value="ribosome small subunit-dependent GTPase A"/>
    <property type="match status" value="1"/>
</dbReference>
<dbReference type="PANTHER" id="PTHR32120">
    <property type="entry name" value="SMALL RIBOSOMAL SUBUNIT BIOGENESIS GTPASE RSGA"/>
    <property type="match status" value="1"/>
</dbReference>
<dbReference type="PANTHER" id="PTHR32120:SF11">
    <property type="entry name" value="SMALL RIBOSOMAL SUBUNIT BIOGENESIS GTPASE RSGA 1, MITOCHONDRIAL-RELATED"/>
    <property type="match status" value="1"/>
</dbReference>
<dbReference type="Pfam" id="PF03193">
    <property type="entry name" value="RsgA_GTPase"/>
    <property type="match status" value="1"/>
</dbReference>
<dbReference type="SUPFAM" id="SSF50249">
    <property type="entry name" value="Nucleic acid-binding proteins"/>
    <property type="match status" value="1"/>
</dbReference>
<dbReference type="SUPFAM" id="SSF52540">
    <property type="entry name" value="P-loop containing nucleoside triphosphate hydrolases"/>
    <property type="match status" value="1"/>
</dbReference>
<dbReference type="PROSITE" id="PS50936">
    <property type="entry name" value="ENGC_GTPASE"/>
    <property type="match status" value="1"/>
</dbReference>
<dbReference type="PROSITE" id="PS51721">
    <property type="entry name" value="G_CP"/>
    <property type="match status" value="1"/>
</dbReference>